<proteinExistence type="inferred from homology"/>
<gene>
    <name evidence="1" type="primary">cobT</name>
    <name type="ordered locus">PSPTO_1715</name>
</gene>
<organism>
    <name type="scientific">Pseudomonas syringae pv. tomato (strain ATCC BAA-871 / DC3000)</name>
    <dbReference type="NCBI Taxonomy" id="223283"/>
    <lineage>
        <taxon>Bacteria</taxon>
        <taxon>Pseudomonadati</taxon>
        <taxon>Pseudomonadota</taxon>
        <taxon>Gammaproteobacteria</taxon>
        <taxon>Pseudomonadales</taxon>
        <taxon>Pseudomonadaceae</taxon>
        <taxon>Pseudomonas</taxon>
    </lineage>
</organism>
<protein>
    <recommendedName>
        <fullName evidence="1">Nicotinate-nucleotide--dimethylbenzimidazole phosphoribosyltransferase</fullName>
        <shortName evidence="1">NN:DBI PRT</shortName>
        <ecNumber evidence="1">2.4.2.21</ecNumber>
    </recommendedName>
    <alternativeName>
        <fullName evidence="1">N(1)-alpha-phosphoribosyltransferase</fullName>
    </alternativeName>
</protein>
<accession>Q885W6</accession>
<feature type="chain" id="PRO_0000167063" description="Nicotinate-nucleotide--dimethylbenzimidazole phosphoribosyltransferase">
    <location>
        <begin position="1"/>
        <end position="350"/>
    </location>
</feature>
<feature type="active site" description="Proton acceptor" evidence="1">
    <location>
        <position position="316"/>
    </location>
</feature>
<keyword id="KW-0169">Cobalamin biosynthesis</keyword>
<keyword id="KW-0328">Glycosyltransferase</keyword>
<keyword id="KW-1185">Reference proteome</keyword>
<keyword id="KW-0808">Transferase</keyword>
<evidence type="ECO:0000255" key="1">
    <source>
        <dbReference type="HAMAP-Rule" id="MF_00230"/>
    </source>
</evidence>
<reference key="1">
    <citation type="journal article" date="2003" name="Proc. Natl. Acad. Sci. U.S.A.">
        <title>The complete genome sequence of the Arabidopsis and tomato pathogen Pseudomonas syringae pv. tomato DC3000.</title>
        <authorList>
            <person name="Buell C.R."/>
            <person name="Joardar V."/>
            <person name="Lindeberg M."/>
            <person name="Selengut J."/>
            <person name="Paulsen I.T."/>
            <person name="Gwinn M.L."/>
            <person name="Dodson R.J."/>
            <person name="DeBoy R.T."/>
            <person name="Durkin A.S."/>
            <person name="Kolonay J.F."/>
            <person name="Madupu R."/>
            <person name="Daugherty S.C."/>
            <person name="Brinkac L.M."/>
            <person name="Beanan M.J."/>
            <person name="Haft D.H."/>
            <person name="Nelson W.C."/>
            <person name="Davidsen T.M."/>
            <person name="Zafar N."/>
            <person name="Zhou L."/>
            <person name="Liu J."/>
            <person name="Yuan Q."/>
            <person name="Khouri H.M."/>
            <person name="Fedorova N.B."/>
            <person name="Tran B."/>
            <person name="Russell D."/>
            <person name="Berry K.J."/>
            <person name="Utterback T.R."/>
            <person name="Van Aken S.E."/>
            <person name="Feldblyum T.V."/>
            <person name="D'Ascenzo M."/>
            <person name="Deng W.-L."/>
            <person name="Ramos A.R."/>
            <person name="Alfano J.R."/>
            <person name="Cartinhour S."/>
            <person name="Chatterjee A.K."/>
            <person name="Delaney T.P."/>
            <person name="Lazarowitz S.G."/>
            <person name="Martin G.B."/>
            <person name="Schneider D.J."/>
            <person name="Tang X."/>
            <person name="Bender C.L."/>
            <person name="White O."/>
            <person name="Fraser C.M."/>
            <person name="Collmer A."/>
        </authorList>
    </citation>
    <scope>NUCLEOTIDE SEQUENCE [LARGE SCALE GENOMIC DNA]</scope>
    <source>
        <strain>ATCC BAA-871 / DC3000</strain>
    </source>
</reference>
<name>COBT_PSESM</name>
<dbReference type="EC" id="2.4.2.21" evidence="1"/>
<dbReference type="EMBL" id="AE016853">
    <property type="protein sequence ID" value="AAO55235.1"/>
    <property type="molecule type" value="Genomic_DNA"/>
</dbReference>
<dbReference type="RefSeq" id="NP_791540.1">
    <property type="nucleotide sequence ID" value="NC_004578.1"/>
</dbReference>
<dbReference type="RefSeq" id="WP_005766686.1">
    <property type="nucleotide sequence ID" value="NC_004578.1"/>
</dbReference>
<dbReference type="SMR" id="Q885W6"/>
<dbReference type="STRING" id="223283.PSPTO_1715"/>
<dbReference type="GeneID" id="1183352"/>
<dbReference type="KEGG" id="pst:PSPTO_1715"/>
<dbReference type="PATRIC" id="fig|223283.9.peg.1743"/>
<dbReference type="eggNOG" id="COG2038">
    <property type="taxonomic scope" value="Bacteria"/>
</dbReference>
<dbReference type="HOGENOM" id="CLU_002982_0_1_6"/>
<dbReference type="OrthoDB" id="9781491at2"/>
<dbReference type="PhylomeDB" id="Q885W6"/>
<dbReference type="UniPathway" id="UPA00061">
    <property type="reaction ID" value="UER00516"/>
</dbReference>
<dbReference type="Proteomes" id="UP000002515">
    <property type="component" value="Chromosome"/>
</dbReference>
<dbReference type="GO" id="GO:0008939">
    <property type="term" value="F:nicotinate-nucleotide-dimethylbenzimidazole phosphoribosyltransferase activity"/>
    <property type="evidence" value="ECO:0007669"/>
    <property type="project" value="UniProtKB-UniRule"/>
</dbReference>
<dbReference type="GO" id="GO:0009236">
    <property type="term" value="P:cobalamin biosynthetic process"/>
    <property type="evidence" value="ECO:0007669"/>
    <property type="project" value="UniProtKB-KW"/>
</dbReference>
<dbReference type="CDD" id="cd02439">
    <property type="entry name" value="DMB-PRT_CobT"/>
    <property type="match status" value="1"/>
</dbReference>
<dbReference type="FunFam" id="3.40.50.10210:FF:000001">
    <property type="entry name" value="Nicotinate-nucleotide--dimethylbenzimidazole phosphoribosyltransferase"/>
    <property type="match status" value="1"/>
</dbReference>
<dbReference type="Gene3D" id="1.10.1610.10">
    <property type="match status" value="1"/>
</dbReference>
<dbReference type="Gene3D" id="3.40.50.10210">
    <property type="match status" value="1"/>
</dbReference>
<dbReference type="HAMAP" id="MF_00230">
    <property type="entry name" value="CobT"/>
    <property type="match status" value="1"/>
</dbReference>
<dbReference type="InterPro" id="IPR003200">
    <property type="entry name" value="Nict_dMeBzImd_PRibTrfase"/>
</dbReference>
<dbReference type="InterPro" id="IPR017846">
    <property type="entry name" value="Nict_dMeBzImd_PRibTrfase_bact"/>
</dbReference>
<dbReference type="InterPro" id="IPR023195">
    <property type="entry name" value="Nict_dMeBzImd_PRibTrfase_N"/>
</dbReference>
<dbReference type="InterPro" id="IPR036087">
    <property type="entry name" value="Nict_dMeBzImd_PRibTrfase_sf"/>
</dbReference>
<dbReference type="NCBIfam" id="TIGR03160">
    <property type="entry name" value="cobT_DBIPRT"/>
    <property type="match status" value="1"/>
</dbReference>
<dbReference type="NCBIfam" id="NF000996">
    <property type="entry name" value="PRK00105.1"/>
    <property type="match status" value="1"/>
</dbReference>
<dbReference type="PANTHER" id="PTHR43463">
    <property type="entry name" value="NICOTINATE-NUCLEOTIDE--DIMETHYLBENZIMIDAZOLE PHOSPHORIBOSYLTRANSFERASE"/>
    <property type="match status" value="1"/>
</dbReference>
<dbReference type="PANTHER" id="PTHR43463:SF1">
    <property type="entry name" value="NICOTINATE-NUCLEOTIDE--DIMETHYLBENZIMIDAZOLE PHOSPHORIBOSYLTRANSFERASE"/>
    <property type="match status" value="1"/>
</dbReference>
<dbReference type="Pfam" id="PF02277">
    <property type="entry name" value="DBI_PRT"/>
    <property type="match status" value="1"/>
</dbReference>
<dbReference type="SUPFAM" id="SSF52733">
    <property type="entry name" value="Nicotinate mononucleotide:5,6-dimethylbenzimidazole phosphoribosyltransferase (CobT)"/>
    <property type="match status" value="1"/>
</dbReference>
<comment type="function">
    <text evidence="1">Catalyzes the synthesis of alpha-ribazole-5'-phosphate from nicotinate mononucleotide (NAMN) and 5,6-dimethylbenzimidazole (DMB).</text>
</comment>
<comment type="catalytic activity">
    <reaction evidence="1">
        <text>5,6-dimethylbenzimidazole + nicotinate beta-D-ribonucleotide = alpha-ribazole 5'-phosphate + nicotinate + H(+)</text>
        <dbReference type="Rhea" id="RHEA:11196"/>
        <dbReference type="ChEBI" id="CHEBI:15378"/>
        <dbReference type="ChEBI" id="CHEBI:15890"/>
        <dbReference type="ChEBI" id="CHEBI:32544"/>
        <dbReference type="ChEBI" id="CHEBI:57502"/>
        <dbReference type="ChEBI" id="CHEBI:57918"/>
        <dbReference type="EC" id="2.4.2.21"/>
    </reaction>
</comment>
<comment type="pathway">
    <text evidence="1">Nucleoside biosynthesis; alpha-ribazole biosynthesis; alpha-ribazole from 5,6-dimethylbenzimidazole: step 1/2.</text>
</comment>
<comment type="similarity">
    <text evidence="1">Belongs to the CobT family.</text>
</comment>
<sequence>MSNSWWLKPAQAIDVPMREAALARQQQLTKPAGSLAQLERLAVQLSGLQGRERPAADKLWIAIFAGDHGVVAEGVSAYPQEVTGQMLHNFVNGGAAISVLARQLSAQLDVVDLGTVSPMDLPGVRHLRIGAGTANFVDGPAMTVEQGLAALQAGRDSVLRAKAVGTELFIGGEMGIGNTAAASAVACSVLECAAPLLVGPGTGLNAEGIVHKTRVIERALALHAEHAGDPLQSLFCLGGFEIAALTGAYLACAQEGIVAMVDGFICSVAALVAVRLNPSCRDWLLFGHRGAEPGHRHLLETLQAEPLLDLGLRLGEGSGAALAVPLVRLACELHNGMATFAEAAVADRPA</sequence>